<name>BAP1_CHICK</name>
<feature type="chain" id="PRO_0000395818" description="Ubiquitin carboxyl-terminal hydrolase BAP1">
    <location>
        <begin position="1"/>
        <end position="700"/>
    </location>
</feature>
<feature type="domain" description="UCH catalytic" evidence="3">
    <location>
        <begin position="4"/>
        <end position="235"/>
    </location>
</feature>
<feature type="domain" description="ULD" evidence="4">
    <location>
        <begin position="641"/>
        <end position="669"/>
    </location>
</feature>
<feature type="region of interest" description="Disordered" evidence="5">
    <location>
        <begin position="273"/>
        <end position="346"/>
    </location>
</feature>
<feature type="region of interest" description="Disordered" evidence="5">
    <location>
        <begin position="363"/>
        <end position="405"/>
    </location>
</feature>
<feature type="region of interest" description="Disordered" evidence="5">
    <location>
        <begin position="469"/>
        <end position="513"/>
    </location>
</feature>
<feature type="region of interest" description="Disordered" evidence="5">
    <location>
        <begin position="674"/>
        <end position="700"/>
    </location>
</feature>
<feature type="coiled-coil region" evidence="2">
    <location>
        <begin position="598"/>
        <end position="632"/>
    </location>
</feature>
<feature type="short sequence motif" description="Nuclear localization signal" evidence="1">
    <location>
        <begin position="688"/>
        <end position="693"/>
    </location>
</feature>
<feature type="compositionally biased region" description="Low complexity" evidence="5">
    <location>
        <begin position="273"/>
        <end position="282"/>
    </location>
</feature>
<feature type="compositionally biased region" description="Low complexity" evidence="5">
    <location>
        <begin position="317"/>
        <end position="332"/>
    </location>
</feature>
<feature type="compositionally biased region" description="Acidic residues" evidence="5">
    <location>
        <begin position="386"/>
        <end position="399"/>
    </location>
</feature>
<feature type="active site" description="Nucleophile" evidence="3">
    <location>
        <position position="91"/>
    </location>
</feature>
<feature type="active site" description="Proton donor" evidence="3">
    <location>
        <position position="169"/>
    </location>
</feature>
<feature type="site" description="Transition state stabilizer" evidence="3">
    <location>
        <position position="85"/>
    </location>
</feature>
<feature type="site" description="Important for enzyme activity" evidence="3">
    <location>
        <position position="184"/>
    </location>
</feature>
<proteinExistence type="evidence at transcript level"/>
<evidence type="ECO:0000250" key="1">
    <source>
        <dbReference type="UniProtKB" id="Q92560"/>
    </source>
</evidence>
<evidence type="ECO:0000255" key="2"/>
<evidence type="ECO:0000255" key="3">
    <source>
        <dbReference type="PROSITE-ProRule" id="PRU01393"/>
    </source>
</evidence>
<evidence type="ECO:0000255" key="4">
    <source>
        <dbReference type="PROSITE-ProRule" id="PRU01394"/>
    </source>
</evidence>
<evidence type="ECO:0000256" key="5">
    <source>
        <dbReference type="SAM" id="MobiDB-lite"/>
    </source>
</evidence>
<evidence type="ECO:0000305" key="6"/>
<dbReference type="EC" id="3.4.19.12" evidence="1"/>
<dbReference type="EMBL" id="AJ851614">
    <property type="protein sequence ID" value="CAH65248.1"/>
    <property type="molecule type" value="mRNA"/>
</dbReference>
<dbReference type="RefSeq" id="NP_001025761.1">
    <property type="nucleotide sequence ID" value="NM_001030590.1"/>
</dbReference>
<dbReference type="SMR" id="Q5F3N6"/>
<dbReference type="FunCoup" id="Q5F3N6">
    <property type="interactions" value="1883"/>
</dbReference>
<dbReference type="STRING" id="9031.ENSGALP00000006954"/>
<dbReference type="MEROPS" id="C12.004"/>
<dbReference type="GlyGen" id="Q5F3N6">
    <property type="glycosylation" value="1 site"/>
</dbReference>
<dbReference type="PaxDb" id="9031-ENSGALP00000006954"/>
<dbReference type="GeneID" id="415944"/>
<dbReference type="KEGG" id="gga:415944"/>
<dbReference type="CTD" id="8314"/>
<dbReference type="VEuPathDB" id="HostDB:geneid_415944"/>
<dbReference type="eggNOG" id="KOG2778">
    <property type="taxonomic scope" value="Eukaryota"/>
</dbReference>
<dbReference type="InParanoid" id="Q5F3N6"/>
<dbReference type="OrthoDB" id="1924260at2759"/>
<dbReference type="PhylomeDB" id="Q5F3N6"/>
<dbReference type="PRO" id="PR:Q5F3N6"/>
<dbReference type="Proteomes" id="UP000000539">
    <property type="component" value="Unassembled WGS sequence"/>
</dbReference>
<dbReference type="GO" id="GO:0005737">
    <property type="term" value="C:cytoplasm"/>
    <property type="evidence" value="ECO:0000250"/>
    <property type="project" value="UniProtKB"/>
</dbReference>
<dbReference type="GO" id="GO:0005634">
    <property type="term" value="C:nucleus"/>
    <property type="evidence" value="ECO:0000250"/>
    <property type="project" value="UniProtKB"/>
</dbReference>
<dbReference type="GO" id="GO:0035517">
    <property type="term" value="C:PR-DUB complex"/>
    <property type="evidence" value="ECO:0000250"/>
    <property type="project" value="UniProtKB"/>
</dbReference>
<dbReference type="GO" id="GO:0003682">
    <property type="term" value="F:chromatin binding"/>
    <property type="evidence" value="ECO:0000250"/>
    <property type="project" value="UniProtKB"/>
</dbReference>
<dbReference type="GO" id="GO:0004843">
    <property type="term" value="F:cysteine-type deubiquitinase activity"/>
    <property type="evidence" value="ECO:0000250"/>
    <property type="project" value="UniProtKB"/>
</dbReference>
<dbReference type="GO" id="GO:0031507">
    <property type="term" value="P:heterochromatin formation"/>
    <property type="evidence" value="ECO:0000318"/>
    <property type="project" value="GO_Central"/>
</dbReference>
<dbReference type="GO" id="GO:0045892">
    <property type="term" value="P:negative regulation of DNA-templated transcription"/>
    <property type="evidence" value="ECO:0000250"/>
    <property type="project" value="UniProtKB"/>
</dbReference>
<dbReference type="GO" id="GO:0016579">
    <property type="term" value="P:protein deubiquitination"/>
    <property type="evidence" value="ECO:0000250"/>
    <property type="project" value="UniProtKB"/>
</dbReference>
<dbReference type="GO" id="GO:0071108">
    <property type="term" value="P:protein K48-linked deubiquitination"/>
    <property type="evidence" value="ECO:0000250"/>
    <property type="project" value="UniProtKB"/>
</dbReference>
<dbReference type="GO" id="GO:0051726">
    <property type="term" value="P:regulation of cell cycle"/>
    <property type="evidence" value="ECO:0000250"/>
    <property type="project" value="UniProtKB"/>
</dbReference>
<dbReference type="GO" id="GO:0001558">
    <property type="term" value="P:regulation of cell growth"/>
    <property type="evidence" value="ECO:0000250"/>
    <property type="project" value="UniProtKB"/>
</dbReference>
<dbReference type="GO" id="GO:0006511">
    <property type="term" value="P:ubiquitin-dependent protein catabolic process"/>
    <property type="evidence" value="ECO:0007669"/>
    <property type="project" value="InterPro"/>
</dbReference>
<dbReference type="CDD" id="cd09617">
    <property type="entry name" value="Peptidase_C12_UCH37_BAP1"/>
    <property type="match status" value="1"/>
</dbReference>
<dbReference type="FunFam" id="3.40.532.10:FF:000002">
    <property type="entry name" value="Ubiquitin carboxyl-terminal hydrolase"/>
    <property type="match status" value="1"/>
</dbReference>
<dbReference type="FunFam" id="1.20.58.860:FF:000010">
    <property type="entry name" value="Ubiquitin carboxyl-terminal hydrolase BAP1"/>
    <property type="match status" value="1"/>
</dbReference>
<dbReference type="Gene3D" id="1.20.58.860">
    <property type="match status" value="1"/>
</dbReference>
<dbReference type="Gene3D" id="3.40.532.10">
    <property type="entry name" value="Peptidase C12, ubiquitin carboxyl-terminal hydrolase"/>
    <property type="match status" value="1"/>
</dbReference>
<dbReference type="InterPro" id="IPR038765">
    <property type="entry name" value="Papain-like_cys_pep_sf"/>
</dbReference>
<dbReference type="InterPro" id="IPR001578">
    <property type="entry name" value="Peptidase_C12_UCH"/>
</dbReference>
<dbReference type="InterPro" id="IPR036959">
    <property type="entry name" value="Peptidase_C12_UCH_sf"/>
</dbReference>
<dbReference type="InterPro" id="IPR041507">
    <property type="entry name" value="UCH_C"/>
</dbReference>
<dbReference type="PANTHER" id="PTHR10589">
    <property type="entry name" value="UBIQUITIN CARBOXYL-TERMINAL HYDROLASE"/>
    <property type="match status" value="1"/>
</dbReference>
<dbReference type="PANTHER" id="PTHR10589:SF28">
    <property type="entry name" value="UBIQUITIN CARBOXYL-TERMINAL HYDROLASE BAP1"/>
    <property type="match status" value="1"/>
</dbReference>
<dbReference type="Pfam" id="PF01088">
    <property type="entry name" value="Peptidase_C12"/>
    <property type="match status" value="1"/>
</dbReference>
<dbReference type="Pfam" id="PF18031">
    <property type="entry name" value="UCH_C"/>
    <property type="match status" value="1"/>
</dbReference>
<dbReference type="PRINTS" id="PR00707">
    <property type="entry name" value="UBCTHYDRLASE"/>
</dbReference>
<dbReference type="SUPFAM" id="SSF54001">
    <property type="entry name" value="Cysteine proteinases"/>
    <property type="match status" value="1"/>
</dbReference>
<dbReference type="PROSITE" id="PS52048">
    <property type="entry name" value="UCH_DOMAIN"/>
    <property type="match status" value="1"/>
</dbReference>
<dbReference type="PROSITE" id="PS52049">
    <property type="entry name" value="ULD"/>
    <property type="match status" value="1"/>
</dbReference>
<keyword id="KW-0156">Chromatin regulator</keyword>
<keyword id="KW-0175">Coiled coil</keyword>
<keyword id="KW-0963">Cytoplasm</keyword>
<keyword id="KW-0378">Hydrolase</keyword>
<keyword id="KW-0539">Nucleus</keyword>
<keyword id="KW-0645">Protease</keyword>
<keyword id="KW-1185">Reference proteome</keyword>
<keyword id="KW-0788">Thiol protease</keyword>
<keyword id="KW-0833">Ubl conjugation pathway</keyword>
<comment type="function">
    <text evidence="1">Deubiquitinating enzyme that plays a key role in chromatin by mediating deubiquitination of histone H2A. Catalytic component of the PR-DUB complex, a complex that specifically mediates deubiquitination of histone H2A monoubiquitinated at 'Lys-119' (H2AK119ub1) (By similarity).</text>
</comment>
<comment type="catalytic activity">
    <reaction evidence="1">
        <text>Thiol-dependent hydrolysis of ester, thioester, amide, peptide and isopeptide bonds formed by the C-terminal Gly of ubiquitin (a 76-residue protein attached to proteins as an intracellular targeting signal).</text>
        <dbReference type="EC" id="3.4.19.12"/>
    </reaction>
</comment>
<comment type="subunit">
    <text evidence="1">Component of the PR-DUB complex.</text>
</comment>
<comment type="subcellular location">
    <subcellularLocation>
        <location evidence="1">Cytoplasm</location>
    </subcellularLocation>
    <subcellularLocation>
        <location evidence="1">Nucleus</location>
    </subcellularLocation>
    <text evidence="1">Mainly nuclear (By similarity). Binds to chromatin (By similarity).</text>
</comment>
<comment type="similarity">
    <text evidence="6">Belongs to the peptidase C12 family. BAP1 subfamily.</text>
</comment>
<protein>
    <recommendedName>
        <fullName>Ubiquitin carboxyl-terminal hydrolase BAP1</fullName>
        <ecNumber evidence="1">3.4.19.12</ecNumber>
    </recommendedName>
    <alternativeName>
        <fullName>BRCA1-associated protein 1</fullName>
    </alternativeName>
</protein>
<reference key="1">
    <citation type="journal article" date="2005" name="Genome Biol.">
        <title>Full-length cDNAs from chicken bursal lymphocytes to facilitate gene function analysis.</title>
        <authorList>
            <person name="Caldwell R.B."/>
            <person name="Kierzek A.M."/>
            <person name="Arakawa H."/>
            <person name="Bezzubov Y."/>
            <person name="Zaim J."/>
            <person name="Fiedler P."/>
            <person name="Kutter S."/>
            <person name="Blagodatski A."/>
            <person name="Kostovska D."/>
            <person name="Koter M."/>
            <person name="Plachy J."/>
            <person name="Carninci P."/>
            <person name="Hayashizaki Y."/>
            <person name="Buerstedde J.-M."/>
        </authorList>
    </citation>
    <scope>NUCLEOTIDE SEQUENCE [LARGE SCALE MRNA]</scope>
    <source>
        <strain>CB</strain>
        <tissue>Bursa of Fabricius</tissue>
    </source>
</reference>
<sequence>MNKGWLELESDPGLFTLLVEDFGVKGVQVEEIYDLQSKCQGPVYGFIFLFKWIEESRSRRKVSTLVDETSVIDDDIVNNMFFAHQLIPNSCATHALLSVLLNCNNVDLGPTLSRMKDFTKGFSPESKGYAIGNAPELAKARNSHARPEPRHLPEKQNGISAVRTMEAFHFVSYVPIKGRLFELDGLKVYPIDHGPWADDEEWTDKARRVIMERIGLATAGEPYHDIRFNLMAVVPDRRMKYESKLHILKMNRQTVLEALQQLIRVTQPELIQSQKSQESQSPEEAKPANSKTVAPESTHPDGADEPASQGHTTATQSPPTKSKPVAKASASSINGVPPANPNPIVQRLPAFLDNHNYAKSPMQEEEDLAAGVGRSRVPVRQHQQYSDDEDDYDDDEEEEVRNTNSAIRYKRKGQVKQEHAAGAADGQLSVLQPNTINVLAEKLKESQKDLSIPLSIKTTGGGAAVAIVTHSQPSPTPSNESTDTASEIGSAFNSPLRSPIRSANPTRPSSPVTSHISKVLFGEEDGLLRIDCLRYNRAVRDLGPIISSGLLHLTEDGVFCPLAAADGGKSSPPSIKPGEEAQVTIKLDEKEGSEASGSKEKELLALLKCVEAEIANYEACLKEEVEKRKKFKIDDQRRTHNYDEFICTFISMLAQEGMLASLVEQNISVRRRQGVSIGRLHKQRKPDRRKRSRPYKAKRQ</sequence>
<accession>Q5F3N6</accession>
<organism>
    <name type="scientific">Gallus gallus</name>
    <name type="common">Chicken</name>
    <dbReference type="NCBI Taxonomy" id="9031"/>
    <lineage>
        <taxon>Eukaryota</taxon>
        <taxon>Metazoa</taxon>
        <taxon>Chordata</taxon>
        <taxon>Craniata</taxon>
        <taxon>Vertebrata</taxon>
        <taxon>Euteleostomi</taxon>
        <taxon>Archelosauria</taxon>
        <taxon>Archosauria</taxon>
        <taxon>Dinosauria</taxon>
        <taxon>Saurischia</taxon>
        <taxon>Theropoda</taxon>
        <taxon>Coelurosauria</taxon>
        <taxon>Aves</taxon>
        <taxon>Neognathae</taxon>
        <taxon>Galloanserae</taxon>
        <taxon>Galliformes</taxon>
        <taxon>Phasianidae</taxon>
        <taxon>Phasianinae</taxon>
        <taxon>Gallus</taxon>
    </lineage>
</organism>
<gene>
    <name type="primary">BAP1</name>
    <name type="ORF">RCJMB04_11f19</name>
</gene>